<proteinExistence type="predicted"/>
<keyword id="KW-1185">Reference proteome</keyword>
<evidence type="ECO:0000256" key="1">
    <source>
        <dbReference type="SAM" id="MobiDB-lite"/>
    </source>
</evidence>
<reference key="1">
    <citation type="journal article" date="2002" name="Nature">
        <title>Sequence and analysis of chromosome 2 of Dictyostelium discoideum.</title>
        <authorList>
            <person name="Gloeckner G."/>
            <person name="Eichinger L."/>
            <person name="Szafranski K."/>
            <person name="Pachebat J.A."/>
            <person name="Bankier A.T."/>
            <person name="Dear P.H."/>
            <person name="Lehmann R."/>
            <person name="Baumgart C."/>
            <person name="Parra G."/>
            <person name="Abril J.F."/>
            <person name="Guigo R."/>
            <person name="Kumpf K."/>
            <person name="Tunggal B."/>
            <person name="Cox E.C."/>
            <person name="Quail M.A."/>
            <person name="Platzer M."/>
            <person name="Rosenthal A."/>
            <person name="Noegel A.A."/>
        </authorList>
    </citation>
    <scope>NUCLEOTIDE SEQUENCE [LARGE SCALE GENOMIC DNA]</scope>
    <source>
        <strain>AX4</strain>
    </source>
</reference>
<reference key="2">
    <citation type="journal article" date="2005" name="Nature">
        <title>The genome of the social amoeba Dictyostelium discoideum.</title>
        <authorList>
            <person name="Eichinger L."/>
            <person name="Pachebat J.A."/>
            <person name="Gloeckner G."/>
            <person name="Rajandream M.A."/>
            <person name="Sucgang R."/>
            <person name="Berriman M."/>
            <person name="Song J."/>
            <person name="Olsen R."/>
            <person name="Szafranski K."/>
            <person name="Xu Q."/>
            <person name="Tunggal B."/>
            <person name="Kummerfeld S."/>
            <person name="Madera M."/>
            <person name="Konfortov B.A."/>
            <person name="Rivero F."/>
            <person name="Bankier A.T."/>
            <person name="Lehmann R."/>
            <person name="Hamlin N."/>
            <person name="Davies R."/>
            <person name="Gaudet P."/>
            <person name="Fey P."/>
            <person name="Pilcher K."/>
            <person name="Chen G."/>
            <person name="Saunders D."/>
            <person name="Sodergren E.J."/>
            <person name="Davis P."/>
            <person name="Kerhornou A."/>
            <person name="Nie X."/>
            <person name="Hall N."/>
            <person name="Anjard C."/>
            <person name="Hemphill L."/>
            <person name="Bason N."/>
            <person name="Farbrother P."/>
            <person name="Desany B."/>
            <person name="Just E."/>
            <person name="Morio T."/>
            <person name="Rost R."/>
            <person name="Churcher C.M."/>
            <person name="Cooper J."/>
            <person name="Haydock S."/>
            <person name="van Driessche N."/>
            <person name="Cronin A."/>
            <person name="Goodhead I."/>
            <person name="Muzny D.M."/>
            <person name="Mourier T."/>
            <person name="Pain A."/>
            <person name="Lu M."/>
            <person name="Harper D."/>
            <person name="Lindsay R."/>
            <person name="Hauser H."/>
            <person name="James K.D."/>
            <person name="Quiles M."/>
            <person name="Madan Babu M."/>
            <person name="Saito T."/>
            <person name="Buchrieser C."/>
            <person name="Wardroper A."/>
            <person name="Felder M."/>
            <person name="Thangavelu M."/>
            <person name="Johnson D."/>
            <person name="Knights A."/>
            <person name="Loulseged H."/>
            <person name="Mungall K.L."/>
            <person name="Oliver K."/>
            <person name="Price C."/>
            <person name="Quail M.A."/>
            <person name="Urushihara H."/>
            <person name="Hernandez J."/>
            <person name="Rabbinowitsch E."/>
            <person name="Steffen D."/>
            <person name="Sanders M."/>
            <person name="Ma J."/>
            <person name="Kohara Y."/>
            <person name="Sharp S."/>
            <person name="Simmonds M.N."/>
            <person name="Spiegler S."/>
            <person name="Tivey A."/>
            <person name="Sugano S."/>
            <person name="White B."/>
            <person name="Walker D."/>
            <person name="Woodward J.R."/>
            <person name="Winckler T."/>
            <person name="Tanaka Y."/>
            <person name="Shaulsky G."/>
            <person name="Schleicher M."/>
            <person name="Weinstock G.M."/>
            <person name="Rosenthal A."/>
            <person name="Cox E.C."/>
            <person name="Chisholm R.L."/>
            <person name="Gibbs R.A."/>
            <person name="Loomis W.F."/>
            <person name="Platzer M."/>
            <person name="Kay R.R."/>
            <person name="Williams J.G."/>
            <person name="Dear P.H."/>
            <person name="Noegel A.A."/>
            <person name="Barrell B.G."/>
            <person name="Kuspa A."/>
        </authorList>
    </citation>
    <scope>NUCLEOTIDE SEQUENCE [LARGE SCALE GENOMIC DNA]</scope>
    <source>
        <strain>AX4</strain>
    </source>
</reference>
<protein>
    <recommendedName>
        <fullName>Putative uncharacterized protein DDB_G0277407</fullName>
    </recommendedName>
</protein>
<name>Y9182_DICDI</name>
<gene>
    <name type="ORF">DDB_G0277407</name>
</gene>
<dbReference type="EMBL" id="AAFI02000020">
    <property type="protein sequence ID" value="EAL68666.1"/>
    <property type="molecule type" value="Genomic_DNA"/>
</dbReference>
<dbReference type="RefSeq" id="XP_642592.1">
    <property type="nucleotide sequence ID" value="XM_637500.1"/>
</dbReference>
<dbReference type="PaxDb" id="44689-DDB0169182"/>
<dbReference type="EnsemblProtists" id="EAL68666">
    <property type="protein sequence ID" value="EAL68666"/>
    <property type="gene ID" value="DDB_G0277407"/>
</dbReference>
<dbReference type="GeneID" id="8621009"/>
<dbReference type="KEGG" id="ddi:DDB_G0277407"/>
<dbReference type="dictyBase" id="DDB_G0277407"/>
<dbReference type="eggNOG" id="ENOG502RIH1">
    <property type="taxonomic scope" value="Eukaryota"/>
</dbReference>
<dbReference type="HOGENOM" id="CLU_1996865_0_0_1"/>
<dbReference type="InParanoid" id="Q8T2H7"/>
<dbReference type="PRO" id="PR:Q8T2H7"/>
<dbReference type="Proteomes" id="UP000002195">
    <property type="component" value="Chromosome 2"/>
</dbReference>
<organism>
    <name type="scientific">Dictyostelium discoideum</name>
    <name type="common">Social amoeba</name>
    <dbReference type="NCBI Taxonomy" id="44689"/>
    <lineage>
        <taxon>Eukaryota</taxon>
        <taxon>Amoebozoa</taxon>
        <taxon>Evosea</taxon>
        <taxon>Eumycetozoa</taxon>
        <taxon>Dictyostelia</taxon>
        <taxon>Dictyosteliales</taxon>
        <taxon>Dictyosteliaceae</taxon>
        <taxon>Dictyostelium</taxon>
    </lineage>
</organism>
<sequence length="125" mass="14065">MNKTVGPPTITPTGLSGGMNSTTGSSSTSNIYSSYYKAIDQFQNKNTTDKDLHETLKQGPISSNLFYNNFLNELNNKNNNFNNNNNNNNNNNSNSNNNNNNNSNIVYSNNMSNNYNNNYNNRFKK</sequence>
<accession>Q8T2H7</accession>
<accession>Q54ZQ0</accession>
<accession>Q8T835</accession>
<feature type="chain" id="PRO_0000348178" description="Putative uncharacterized protein DDB_G0277407">
    <location>
        <begin position="1"/>
        <end position="125"/>
    </location>
</feature>
<feature type="region of interest" description="Disordered" evidence="1">
    <location>
        <begin position="1"/>
        <end position="27"/>
    </location>
</feature>
<feature type="region of interest" description="Disordered" evidence="1">
    <location>
        <begin position="76"/>
        <end position="125"/>
    </location>
</feature>
<feature type="compositionally biased region" description="Low complexity" evidence="1">
    <location>
        <begin position="18"/>
        <end position="27"/>
    </location>
</feature>